<sequence length="160" mass="17745">MNPRRKQRLTWVAILVIGVSVATGLMLYALSQSIDLFYTPTELVEGKGKDKQKPQVGQRMRVGGMVVEGSVERDRETLEVSFKITDIGPEVTVLYQGILPDLFREGQGIVAQGELIEPTVLKASEVLAKHDEEYMPPELAEQMKGIKHVNPNTVEKGEGQ</sequence>
<reference key="1">
    <citation type="journal article" date="2004" name="Proc. Natl. Acad. Sci. U.S.A.">
        <title>Genome sequence of the deep-sea gamma-proteobacterium Idiomarina loihiensis reveals amino acid fermentation as a source of carbon and energy.</title>
        <authorList>
            <person name="Hou S."/>
            <person name="Saw J.H."/>
            <person name="Lee K.S."/>
            <person name="Freitas T.A."/>
            <person name="Belisle C."/>
            <person name="Kawarabayasi Y."/>
            <person name="Donachie S.P."/>
            <person name="Pikina A."/>
            <person name="Galperin M.Y."/>
            <person name="Koonin E.V."/>
            <person name="Makarova K.S."/>
            <person name="Omelchenko M.V."/>
            <person name="Sorokin A."/>
            <person name="Wolf Y.I."/>
            <person name="Li Q.X."/>
            <person name="Keum Y.S."/>
            <person name="Campbell S."/>
            <person name="Denery J."/>
            <person name="Aizawa S."/>
            <person name="Shibata S."/>
            <person name="Malahoff A."/>
            <person name="Alam M."/>
        </authorList>
    </citation>
    <scope>NUCLEOTIDE SEQUENCE [LARGE SCALE GENOMIC DNA]</scope>
    <source>
        <strain>ATCC BAA-735 / DSM 15497 / L2-TR</strain>
    </source>
</reference>
<proteinExistence type="inferred from homology"/>
<gene>
    <name evidence="1" type="primary">ccmE</name>
    <name evidence="1" type="synonym">cycJ</name>
    <name type="ordered locus">IL1102</name>
</gene>
<keyword id="KW-0997">Cell inner membrane</keyword>
<keyword id="KW-1003">Cell membrane</keyword>
<keyword id="KW-0201">Cytochrome c-type biogenesis</keyword>
<keyword id="KW-0349">Heme</keyword>
<keyword id="KW-0408">Iron</keyword>
<keyword id="KW-0472">Membrane</keyword>
<keyword id="KW-0479">Metal-binding</keyword>
<keyword id="KW-1185">Reference proteome</keyword>
<keyword id="KW-0735">Signal-anchor</keyword>
<keyword id="KW-0812">Transmembrane</keyword>
<keyword id="KW-1133">Transmembrane helix</keyword>
<organism>
    <name type="scientific">Idiomarina loihiensis (strain ATCC BAA-735 / DSM 15497 / L2-TR)</name>
    <dbReference type="NCBI Taxonomy" id="283942"/>
    <lineage>
        <taxon>Bacteria</taxon>
        <taxon>Pseudomonadati</taxon>
        <taxon>Pseudomonadota</taxon>
        <taxon>Gammaproteobacteria</taxon>
        <taxon>Alteromonadales</taxon>
        <taxon>Idiomarinaceae</taxon>
        <taxon>Idiomarina</taxon>
    </lineage>
</organism>
<name>CCME_IDILO</name>
<evidence type="ECO:0000255" key="1">
    <source>
        <dbReference type="HAMAP-Rule" id="MF_01959"/>
    </source>
</evidence>
<accession>Q5QZQ1</accession>
<protein>
    <recommendedName>
        <fullName evidence="1">Cytochrome c-type biogenesis protein CcmE</fullName>
    </recommendedName>
    <alternativeName>
        <fullName evidence="1">Cytochrome c maturation protein E</fullName>
    </alternativeName>
    <alternativeName>
        <fullName evidence="1">Heme chaperone CcmE</fullName>
    </alternativeName>
</protein>
<feature type="chain" id="PRO_0000238815" description="Cytochrome c-type biogenesis protein CcmE">
    <location>
        <begin position="1"/>
        <end position="160"/>
    </location>
</feature>
<feature type="topological domain" description="Cytoplasmic" evidence="1">
    <location>
        <begin position="1"/>
        <end position="8"/>
    </location>
</feature>
<feature type="transmembrane region" description="Helical; Signal-anchor for type II membrane protein" evidence="1">
    <location>
        <begin position="9"/>
        <end position="29"/>
    </location>
</feature>
<feature type="topological domain" description="Periplasmic" evidence="1">
    <location>
        <begin position="30"/>
        <end position="160"/>
    </location>
</feature>
<feature type="binding site" description="covalent" evidence="1">
    <location>
        <position position="130"/>
    </location>
    <ligand>
        <name>heme</name>
        <dbReference type="ChEBI" id="CHEBI:30413"/>
    </ligand>
</feature>
<feature type="binding site" description="axial binding residue" evidence="1">
    <location>
        <position position="134"/>
    </location>
    <ligand>
        <name>heme</name>
        <dbReference type="ChEBI" id="CHEBI:30413"/>
    </ligand>
    <ligandPart>
        <name>Fe</name>
        <dbReference type="ChEBI" id="CHEBI:18248"/>
    </ligandPart>
</feature>
<dbReference type="EMBL" id="AE017340">
    <property type="protein sequence ID" value="AAV81942.1"/>
    <property type="molecule type" value="Genomic_DNA"/>
</dbReference>
<dbReference type="RefSeq" id="WP_011234353.1">
    <property type="nucleotide sequence ID" value="NC_006512.1"/>
</dbReference>
<dbReference type="SMR" id="Q5QZQ1"/>
<dbReference type="STRING" id="283942.IL1102"/>
<dbReference type="GeneID" id="41336270"/>
<dbReference type="KEGG" id="ilo:IL1102"/>
<dbReference type="eggNOG" id="COG2332">
    <property type="taxonomic scope" value="Bacteria"/>
</dbReference>
<dbReference type="HOGENOM" id="CLU_079503_1_0_6"/>
<dbReference type="OrthoDB" id="9793584at2"/>
<dbReference type="Proteomes" id="UP000001171">
    <property type="component" value="Chromosome"/>
</dbReference>
<dbReference type="GO" id="GO:0005886">
    <property type="term" value="C:plasma membrane"/>
    <property type="evidence" value="ECO:0007669"/>
    <property type="project" value="UniProtKB-SubCell"/>
</dbReference>
<dbReference type="GO" id="GO:0020037">
    <property type="term" value="F:heme binding"/>
    <property type="evidence" value="ECO:0007669"/>
    <property type="project" value="InterPro"/>
</dbReference>
<dbReference type="GO" id="GO:0046872">
    <property type="term" value="F:metal ion binding"/>
    <property type="evidence" value="ECO:0007669"/>
    <property type="project" value="UniProtKB-KW"/>
</dbReference>
<dbReference type="GO" id="GO:0017004">
    <property type="term" value="P:cytochrome complex assembly"/>
    <property type="evidence" value="ECO:0007669"/>
    <property type="project" value="UniProtKB-KW"/>
</dbReference>
<dbReference type="FunFam" id="2.40.50.140:FF:000104">
    <property type="entry name" value="Cytochrome c-type biogenesis protein CcmE"/>
    <property type="match status" value="1"/>
</dbReference>
<dbReference type="Gene3D" id="2.40.50.140">
    <property type="entry name" value="Nucleic acid-binding proteins"/>
    <property type="match status" value="1"/>
</dbReference>
<dbReference type="HAMAP" id="MF_01959">
    <property type="entry name" value="CcmE"/>
    <property type="match status" value="1"/>
</dbReference>
<dbReference type="InterPro" id="IPR004329">
    <property type="entry name" value="CcmE"/>
</dbReference>
<dbReference type="InterPro" id="IPR036127">
    <property type="entry name" value="CcmE-like_sf"/>
</dbReference>
<dbReference type="InterPro" id="IPR012340">
    <property type="entry name" value="NA-bd_OB-fold"/>
</dbReference>
<dbReference type="NCBIfam" id="NF009638">
    <property type="entry name" value="PRK13165.1"/>
    <property type="match status" value="1"/>
</dbReference>
<dbReference type="NCBIfam" id="NF009727">
    <property type="entry name" value="PRK13254.1-1"/>
    <property type="match status" value="1"/>
</dbReference>
<dbReference type="NCBIfam" id="NF009729">
    <property type="entry name" value="PRK13254.1-3"/>
    <property type="match status" value="1"/>
</dbReference>
<dbReference type="NCBIfam" id="NF009731">
    <property type="entry name" value="PRK13254.1-5"/>
    <property type="match status" value="1"/>
</dbReference>
<dbReference type="PANTHER" id="PTHR34128">
    <property type="entry name" value="CYTOCHROME C-TYPE BIOGENESIS PROTEIN CCME HOMOLOG, MITOCHONDRIAL"/>
    <property type="match status" value="1"/>
</dbReference>
<dbReference type="PANTHER" id="PTHR34128:SF2">
    <property type="entry name" value="CYTOCHROME C-TYPE BIOGENESIS PROTEIN CCME HOMOLOG, MITOCHONDRIAL"/>
    <property type="match status" value="1"/>
</dbReference>
<dbReference type="Pfam" id="PF03100">
    <property type="entry name" value="CcmE"/>
    <property type="match status" value="1"/>
</dbReference>
<dbReference type="SUPFAM" id="SSF82093">
    <property type="entry name" value="Heme chaperone CcmE"/>
    <property type="match status" value="1"/>
</dbReference>
<comment type="function">
    <text evidence="1">Heme chaperone required for the biogenesis of c-type cytochromes. Transiently binds heme delivered by CcmC and transfers the heme to apo-cytochromes in a process facilitated by CcmF and CcmH.</text>
</comment>
<comment type="subcellular location">
    <subcellularLocation>
        <location evidence="1">Cell inner membrane</location>
        <topology evidence="1">Single-pass type II membrane protein</topology>
        <orientation evidence="1">Periplasmic side</orientation>
    </subcellularLocation>
</comment>
<comment type="similarity">
    <text evidence="1">Belongs to the CcmE/CycJ family.</text>
</comment>